<accession>B8ZTN3</accession>
<feature type="chain" id="PRO_1000118195" description="Ribosomal RNA small subunit methyltransferase G">
    <location>
        <begin position="1"/>
        <end position="248"/>
    </location>
</feature>
<feature type="binding site" evidence="1">
    <location>
        <position position="93"/>
    </location>
    <ligand>
        <name>S-adenosyl-L-methionine</name>
        <dbReference type="ChEBI" id="CHEBI:59789"/>
    </ligand>
</feature>
<feature type="binding site" evidence="1">
    <location>
        <position position="98"/>
    </location>
    <ligand>
        <name>S-adenosyl-L-methionine</name>
        <dbReference type="ChEBI" id="CHEBI:59789"/>
    </ligand>
</feature>
<feature type="binding site" evidence="1">
    <location>
        <begin position="143"/>
        <end position="144"/>
    </location>
    <ligand>
        <name>S-adenosyl-L-methionine</name>
        <dbReference type="ChEBI" id="CHEBI:59789"/>
    </ligand>
</feature>
<feature type="binding site" evidence="1">
    <location>
        <position position="161"/>
    </location>
    <ligand>
        <name>S-adenosyl-L-methionine</name>
        <dbReference type="ChEBI" id="CHEBI:59789"/>
    </ligand>
</feature>
<gene>
    <name evidence="1" type="primary">rsmG</name>
    <name type="ordered locus">MLBr02708</name>
</gene>
<reference key="1">
    <citation type="journal article" date="2009" name="Nat. Genet.">
        <title>Comparative genomic and phylogeographic analysis of Mycobacterium leprae.</title>
        <authorList>
            <person name="Monot M."/>
            <person name="Honore N."/>
            <person name="Garnier T."/>
            <person name="Zidane N."/>
            <person name="Sherafi D."/>
            <person name="Paniz-Mondolfi A."/>
            <person name="Matsuoka M."/>
            <person name="Taylor G.M."/>
            <person name="Donoghue H.D."/>
            <person name="Bouwman A."/>
            <person name="Mays S."/>
            <person name="Watson C."/>
            <person name="Lockwood D."/>
            <person name="Khamispour A."/>
            <person name="Dowlati Y."/>
            <person name="Jianping S."/>
            <person name="Rea T.H."/>
            <person name="Vera-Cabrera L."/>
            <person name="Stefani M.M."/>
            <person name="Banu S."/>
            <person name="Macdonald M."/>
            <person name="Sapkota B.R."/>
            <person name="Spencer J.S."/>
            <person name="Thomas J."/>
            <person name="Harshman K."/>
            <person name="Singh P."/>
            <person name="Busso P."/>
            <person name="Gattiker A."/>
            <person name="Rougemont J."/>
            <person name="Brennan P.J."/>
            <person name="Cole S.T."/>
        </authorList>
    </citation>
    <scope>NUCLEOTIDE SEQUENCE [LARGE SCALE GENOMIC DNA]</scope>
    <source>
        <strain>Br4923</strain>
    </source>
</reference>
<sequence>MFHVKHVGSYEELASFTSVKGNLGFDTVFEAVFMIFGPRLNIAQRYVDLLANTGIERGLLGPHEANRLWDRHLLNSAVVAELLDPGDRVVDIGSGAGLPGLPLAIARPDLQVVLLEPLLRRVTFLREVVAELGLDVEVVRGRAEELWVRDRIGERDVAVSRAVAALDKLTKWSIPLLRPGGQILAIKGEHVFDEIHQHRRVMASLGAVDVMVVVCGANYLCRPVTVVLTRCGQQMRHKPARVGDRKTQ</sequence>
<evidence type="ECO:0000255" key="1">
    <source>
        <dbReference type="HAMAP-Rule" id="MF_00074"/>
    </source>
</evidence>
<keyword id="KW-0963">Cytoplasm</keyword>
<keyword id="KW-0489">Methyltransferase</keyword>
<keyword id="KW-0698">rRNA processing</keyword>
<keyword id="KW-0949">S-adenosyl-L-methionine</keyword>
<keyword id="KW-0808">Transferase</keyword>
<protein>
    <recommendedName>
        <fullName evidence="1">Ribosomal RNA small subunit methyltransferase G</fullName>
        <ecNumber evidence="1">2.1.1.-</ecNumber>
    </recommendedName>
    <alternativeName>
        <fullName evidence="1">16S rRNA 7-methylguanosine methyltransferase</fullName>
        <shortName evidence="1">16S rRNA m7G methyltransferase</shortName>
    </alternativeName>
</protein>
<comment type="function">
    <text evidence="1">Specifically methylates the N7 position of guanine in position 518 of 16S rRNA.</text>
</comment>
<comment type="subcellular location">
    <subcellularLocation>
        <location evidence="1">Cytoplasm</location>
    </subcellularLocation>
</comment>
<comment type="similarity">
    <text evidence="1">Belongs to the methyltransferase superfamily. RNA methyltransferase RsmG family.</text>
</comment>
<name>RSMG_MYCLB</name>
<organism>
    <name type="scientific">Mycobacterium leprae (strain Br4923)</name>
    <dbReference type="NCBI Taxonomy" id="561304"/>
    <lineage>
        <taxon>Bacteria</taxon>
        <taxon>Bacillati</taxon>
        <taxon>Actinomycetota</taxon>
        <taxon>Actinomycetes</taxon>
        <taxon>Mycobacteriales</taxon>
        <taxon>Mycobacteriaceae</taxon>
        <taxon>Mycobacterium</taxon>
    </lineage>
</organism>
<proteinExistence type="inferred from homology"/>
<dbReference type="EC" id="2.1.1.-" evidence="1"/>
<dbReference type="EMBL" id="FM211192">
    <property type="protein sequence ID" value="CAR72808.1"/>
    <property type="molecule type" value="Genomic_DNA"/>
</dbReference>
<dbReference type="SMR" id="B8ZTN3"/>
<dbReference type="KEGG" id="mlb:MLBr02708"/>
<dbReference type="HOGENOM" id="CLU_065341_5_0_11"/>
<dbReference type="Proteomes" id="UP000006900">
    <property type="component" value="Chromosome"/>
</dbReference>
<dbReference type="GO" id="GO:0005829">
    <property type="term" value="C:cytosol"/>
    <property type="evidence" value="ECO:0007669"/>
    <property type="project" value="TreeGrafter"/>
</dbReference>
<dbReference type="GO" id="GO:0070043">
    <property type="term" value="F:rRNA (guanine-N7-)-methyltransferase activity"/>
    <property type="evidence" value="ECO:0007669"/>
    <property type="project" value="UniProtKB-UniRule"/>
</dbReference>
<dbReference type="CDD" id="cd02440">
    <property type="entry name" value="AdoMet_MTases"/>
    <property type="match status" value="1"/>
</dbReference>
<dbReference type="Gene3D" id="3.40.50.150">
    <property type="entry name" value="Vaccinia Virus protein VP39"/>
    <property type="match status" value="1"/>
</dbReference>
<dbReference type="HAMAP" id="MF_00074">
    <property type="entry name" value="16SrRNA_methyltr_G"/>
    <property type="match status" value="1"/>
</dbReference>
<dbReference type="InterPro" id="IPR003682">
    <property type="entry name" value="rRNA_ssu_MeTfrase_G"/>
</dbReference>
<dbReference type="InterPro" id="IPR029063">
    <property type="entry name" value="SAM-dependent_MTases_sf"/>
</dbReference>
<dbReference type="NCBIfam" id="TIGR00138">
    <property type="entry name" value="rsmG_gidB"/>
    <property type="match status" value="1"/>
</dbReference>
<dbReference type="PANTHER" id="PTHR31760">
    <property type="entry name" value="S-ADENOSYL-L-METHIONINE-DEPENDENT METHYLTRANSFERASES SUPERFAMILY PROTEIN"/>
    <property type="match status" value="1"/>
</dbReference>
<dbReference type="PANTHER" id="PTHR31760:SF0">
    <property type="entry name" value="S-ADENOSYL-L-METHIONINE-DEPENDENT METHYLTRANSFERASES SUPERFAMILY PROTEIN"/>
    <property type="match status" value="1"/>
</dbReference>
<dbReference type="Pfam" id="PF02527">
    <property type="entry name" value="GidB"/>
    <property type="match status" value="1"/>
</dbReference>
<dbReference type="SUPFAM" id="SSF53335">
    <property type="entry name" value="S-adenosyl-L-methionine-dependent methyltransferases"/>
    <property type="match status" value="1"/>
</dbReference>